<name>SG2A2_RAT</name>
<organism>
    <name type="scientific">Rattus norvegicus</name>
    <name type="common">Rat</name>
    <dbReference type="NCBI Taxonomy" id="10116"/>
    <lineage>
        <taxon>Eukaryota</taxon>
        <taxon>Metazoa</taxon>
        <taxon>Chordata</taxon>
        <taxon>Craniata</taxon>
        <taxon>Vertebrata</taxon>
        <taxon>Euteleostomi</taxon>
        <taxon>Mammalia</taxon>
        <taxon>Eutheria</taxon>
        <taxon>Euarchontoglires</taxon>
        <taxon>Glires</taxon>
        <taxon>Rodentia</taxon>
        <taxon>Myomorpha</taxon>
        <taxon>Muroidea</taxon>
        <taxon>Muridae</taxon>
        <taxon>Murinae</taxon>
        <taxon>Rattus</taxon>
    </lineage>
</organism>
<feature type="signal peptide" evidence="2">
    <location>
        <begin position="1"/>
        <end position="18"/>
    </location>
</feature>
<feature type="chain" id="PRO_0000036377" description="Secretoglobin family 2A member 2">
    <location>
        <begin position="19"/>
        <end position="95"/>
    </location>
</feature>
<feature type="glycosylation site" description="N-linked (GlcNAc...) asparagine" evidence="2">
    <location>
        <position position="35"/>
    </location>
</feature>
<feature type="sequence conflict" description="In Ref. 4; AAA41965." evidence="3" ref="4">
    <original>D</original>
    <variation>A</variation>
    <location>
        <position position="53"/>
    </location>
</feature>
<feature type="sequence conflict" description="In Ref. 3." evidence="3" ref="3">
    <original>G</original>
    <variation>S</variation>
    <location>
        <position position="79"/>
    </location>
</feature>
<dbReference type="EMBL" id="V01257">
    <property type="protein sequence ID" value="CAB76237.1"/>
    <property type="molecule type" value="Genomic_DNA"/>
</dbReference>
<dbReference type="EMBL" id="V01258">
    <property type="protein sequence ID" value="CAB76237.1"/>
    <property type="status" value="JOINED"/>
    <property type="molecule type" value="Genomic_DNA"/>
</dbReference>
<dbReference type="EMBL" id="V01259">
    <property type="protein sequence ID" value="CAB76237.1"/>
    <property type="status" value="JOINED"/>
    <property type="molecule type" value="Genomic_DNA"/>
</dbReference>
<dbReference type="EMBL" id="V01263">
    <property type="protein sequence ID" value="CAA24577.1"/>
    <property type="molecule type" value="mRNA"/>
</dbReference>
<dbReference type="EMBL" id="M71245">
    <property type="protein sequence ID" value="AAA41965.1"/>
    <property type="molecule type" value="Genomic_DNA"/>
</dbReference>
<dbReference type="EMBL" id="BC062401">
    <property type="protein sequence ID" value="AAH62401.1"/>
    <property type="molecule type" value="mRNA"/>
</dbReference>
<dbReference type="PIR" id="A92395">
    <property type="entry name" value="BORT3"/>
</dbReference>
<dbReference type="RefSeq" id="NP_976078.1">
    <property type="nucleotide sequence ID" value="NM_203333.2"/>
</dbReference>
<dbReference type="RefSeq" id="XP_017445787.1">
    <property type="nucleotide sequence ID" value="XM_017590298.1"/>
</dbReference>
<dbReference type="SMR" id="P02780"/>
<dbReference type="FunCoup" id="P02780">
    <property type="interactions" value="16"/>
</dbReference>
<dbReference type="STRING" id="10116.ENSRNOP00000037869"/>
<dbReference type="GlyCosmos" id="P02780">
    <property type="glycosylation" value="1 site, No reported glycans"/>
</dbReference>
<dbReference type="GlyGen" id="P02780">
    <property type="glycosylation" value="1 site"/>
</dbReference>
<dbReference type="iPTMnet" id="P02780"/>
<dbReference type="PhosphoSitePlus" id="P02780"/>
<dbReference type="PaxDb" id="10116-ENSRNOP00000037869"/>
<dbReference type="Ensembl" id="ENSRNOT00000031612.4">
    <property type="protein sequence ID" value="ENSRNOP00000037869.2"/>
    <property type="gene ID" value="ENSRNOG00000023151.4"/>
</dbReference>
<dbReference type="GeneID" id="361725"/>
<dbReference type="KEGG" id="rno:361725"/>
<dbReference type="UCSC" id="RGD:735031">
    <property type="organism name" value="rat"/>
</dbReference>
<dbReference type="AGR" id="RGD:735031"/>
<dbReference type="CTD" id="4246"/>
<dbReference type="RGD" id="735031">
    <property type="gene designation" value="Scgb2a2"/>
</dbReference>
<dbReference type="eggNOG" id="ENOG502TE5J">
    <property type="taxonomic scope" value="Eukaryota"/>
</dbReference>
<dbReference type="GeneTree" id="ENSGT00390000013802"/>
<dbReference type="HOGENOM" id="CLU_161063_0_0_1"/>
<dbReference type="InParanoid" id="P02780"/>
<dbReference type="OMA" id="LPLYCFA"/>
<dbReference type="OrthoDB" id="9741516at2759"/>
<dbReference type="PhylomeDB" id="P02780"/>
<dbReference type="TreeFam" id="TF338521"/>
<dbReference type="PRO" id="PR:P02780"/>
<dbReference type="Proteomes" id="UP000002494">
    <property type="component" value="Chromosome 1"/>
</dbReference>
<dbReference type="Bgee" id="ENSRNOG00000020305">
    <property type="expression patterns" value="Expressed in pancreas and 3 other cell types or tissues"/>
</dbReference>
<dbReference type="GO" id="GO:0005615">
    <property type="term" value="C:extracellular space"/>
    <property type="evidence" value="ECO:0000266"/>
    <property type="project" value="RGD"/>
</dbReference>
<dbReference type="GO" id="GO:0044877">
    <property type="term" value="F:protein-containing complex binding"/>
    <property type="evidence" value="ECO:0000304"/>
    <property type="project" value="RGD"/>
</dbReference>
<dbReference type="GO" id="GO:0005496">
    <property type="term" value="F:steroid binding"/>
    <property type="evidence" value="ECO:0007669"/>
    <property type="project" value="UniProtKB-KW"/>
</dbReference>
<dbReference type="GO" id="GO:0030521">
    <property type="term" value="P:androgen receptor signaling pathway"/>
    <property type="evidence" value="ECO:0000266"/>
    <property type="project" value="RGD"/>
</dbReference>
<dbReference type="CDD" id="cd00633">
    <property type="entry name" value="Secretoglobin"/>
    <property type="match status" value="1"/>
</dbReference>
<dbReference type="InterPro" id="IPR016126">
    <property type="entry name" value="Secretoglobin"/>
</dbReference>
<dbReference type="InterPro" id="IPR035960">
    <property type="entry name" value="Secretoglobin_sf"/>
</dbReference>
<dbReference type="PANTHER" id="PTHR14037:SF4">
    <property type="entry name" value="MAMMAGLOBIN-B"/>
    <property type="match status" value="1"/>
</dbReference>
<dbReference type="PANTHER" id="PTHR14037">
    <property type="entry name" value="MAMMAGLOBIN-RELATED"/>
    <property type="match status" value="1"/>
</dbReference>
<dbReference type="Pfam" id="PF01099">
    <property type="entry name" value="Uteroglobin"/>
    <property type="match status" value="1"/>
</dbReference>
<dbReference type="SUPFAM" id="SSF48201">
    <property type="entry name" value="Uteroglobin-like"/>
    <property type="match status" value="1"/>
</dbReference>
<dbReference type="PROSITE" id="PS51311">
    <property type="entry name" value="SCGB"/>
    <property type="match status" value="1"/>
</dbReference>
<protein>
    <recommendedName>
        <fullName>Secretoglobin family 2A member 2</fullName>
    </recommendedName>
    <alternativeName>
        <fullName>C3.1</fullName>
    </alternativeName>
    <alternativeName>
        <fullName>Prostatein peptide C3</fullName>
    </alternativeName>
    <alternativeName>
        <fullName>Prostatic steroid-binding protein C3</fullName>
    </alternativeName>
</protein>
<keyword id="KW-0903">Direct protein sequencing</keyword>
<keyword id="KW-0325">Glycoprotein</keyword>
<keyword id="KW-0446">Lipid-binding</keyword>
<keyword id="KW-1185">Reference proteome</keyword>
<keyword id="KW-0964">Secreted</keyword>
<keyword id="KW-0732">Signal</keyword>
<keyword id="KW-0754">Steroid-binding</keyword>
<gene>
    <name type="primary">Scgb2a2</name>
    <name type="synonym">Psbpc3</name>
</gene>
<reference key="1">
    <citation type="journal article" date="1983" name="EMBO J.">
        <title>Rat prostatic steroid binding protein: DNA sequence and transcript maps of the two C3 genes.</title>
        <authorList>
            <person name="Hurst H.C."/>
            <person name="Parker M.G."/>
        </authorList>
    </citation>
    <scope>NUCLEOTIDE SEQUENCE [GENOMIC DNA]</scope>
    <scope>TISSUE SPECIFICITY</scope>
    <scope>INDUCTION</scope>
</reference>
<reference key="2">
    <citation type="journal article" date="1983" name="J. Biol. Chem.">
        <title>Prostatic steroid-binding protein. Isolation and characterization of C3 genes.</title>
        <authorList>
            <person name="Parker M.G."/>
            <person name="White R."/>
            <person name="Hurst H."/>
            <person name="Needham M."/>
            <person name="Tilly R."/>
        </authorList>
    </citation>
    <scope>NUCLEOTIDE SEQUENCE [MRNA]</scope>
</reference>
<reference key="3">
    <citation type="journal article" date="1983" name="J. Biol. Chem.">
        <title>Isolation of two genomic sequences encoding the Mr = 14,000 subunit of rat prostatein.</title>
        <authorList>
            <person name="Viskochil D.H."/>
            <person name="Perry S.T."/>
            <person name="Lea O.A."/>
            <person name="Stafford D.W."/>
            <person name="Wilson E.M."/>
            <person name="French F.S."/>
        </authorList>
    </citation>
    <scope>NUCLEOTIDE SEQUENCE [MRNA]</scope>
</reference>
<reference key="4">
    <citation type="journal article" date="1992" name="J. Biol. Chem.">
        <title>Response elements of the androgen-regulated C3 gene.</title>
        <authorList>
            <person name="Tan J.A."/>
            <person name="Marschke K.B."/>
            <person name="Ho K.-C."/>
            <person name="Perry S.T."/>
            <person name="Wilson E.M."/>
            <person name="French F.S."/>
        </authorList>
    </citation>
    <scope>NUCLEOTIDE SEQUENCE [GENOMIC DNA]</scope>
</reference>
<reference key="5">
    <citation type="journal article" date="1992" name="J. Biol. Chem.">
        <authorList>
            <person name="Tan J.A."/>
            <person name="Marschke K.B."/>
            <person name="Ho K.C."/>
            <person name="Perry S.T."/>
            <person name="Wilson E.M."/>
            <person name="French F.S."/>
        </authorList>
    </citation>
    <scope>ERRATUM OF PUBMED:1537831</scope>
</reference>
<reference key="6">
    <citation type="journal article" date="2004" name="Genome Res.">
        <title>The status, quality, and expansion of the NIH full-length cDNA project: the Mammalian Gene Collection (MGC).</title>
        <authorList>
            <consortium name="The MGC Project Team"/>
        </authorList>
    </citation>
    <scope>NUCLEOTIDE SEQUENCE [LARGE SCALE MRNA]</scope>
    <source>
        <tissue>Prostate</tissue>
    </source>
</reference>
<reference key="7">
    <citation type="journal article" date="1981" name="Eur. J. Biochem.">
        <title>Structural studies on rat prostatic binding protein. The primary structure of its glycosylated component C3.</title>
        <authorList>
            <person name="Peeters B."/>
            <person name="Rombauts W."/>
            <person name="Mous J."/>
            <person name="Heyns W."/>
        </authorList>
    </citation>
    <scope>PROTEIN SEQUENCE OF 19-95</scope>
</reference>
<accession>P02780</accession>
<accession>Q63463</accession>
<comment type="function">
    <text>Part of prostatein which is the major secretory glycoprotein of ventral prostate gland. Steroid-binding protein; can bind non-polar steroids, cholesterol and a group of small proline-rich peptides.</text>
</comment>
<comment type="subunit">
    <text>Prostatein is composed of three different peptides called C1, C2 and C3. These form covalent C1:C3 (F) and C2:C3 (S) heterodimers whose non-covalent association forms tetrameric (C1:C3/C3:C2) prostatein molecules.</text>
</comment>
<comment type="subcellular location">
    <subcellularLocation>
        <location>Secreted</location>
    </subcellularLocation>
</comment>
<comment type="tissue specificity">
    <text evidence="1">Highly expressed in ventral prostate.</text>
</comment>
<comment type="induction">
    <text evidence="1">Androgen dependent, as shown by the decrease in the level of the protein following castration.</text>
</comment>
<comment type="similarity">
    <text evidence="3">Belongs to the secretoglobin family. Lipophilin subfamily.</text>
</comment>
<sequence>MKLVFLFLLVTIPICCYASGSGCSILDEVIRGTINSTVTLHDYMKLVKPYVQDHFTEKAVKQFKQCFLDQTDKTLENVGVMMEAIFNSESCQQPS</sequence>
<proteinExistence type="evidence at protein level"/>
<evidence type="ECO:0000269" key="1">
    <source>
    </source>
</evidence>
<evidence type="ECO:0000269" key="2">
    <source>
    </source>
</evidence>
<evidence type="ECO:0000305" key="3"/>